<gene>
    <name type="primary">Xpo6</name>
    <name type="synonym">Ranbp20</name>
</gene>
<reference key="1">
    <citation type="submission" date="2001-04" db="EMBL/GenBank/DDBJ databases">
        <authorList>
            <person name="Hartmann E."/>
            <person name="Goerlich D."/>
        </authorList>
    </citation>
    <scope>NUCLEOTIDE SEQUENCE [MRNA] (ISOFORM 1)</scope>
</reference>
<reference key="2">
    <citation type="journal article" date="2005" name="Science">
        <title>The transcriptional landscape of the mammalian genome.</title>
        <authorList>
            <person name="Carninci P."/>
            <person name="Kasukawa T."/>
            <person name="Katayama S."/>
            <person name="Gough J."/>
            <person name="Frith M.C."/>
            <person name="Maeda N."/>
            <person name="Oyama R."/>
            <person name="Ravasi T."/>
            <person name="Lenhard B."/>
            <person name="Wells C."/>
            <person name="Kodzius R."/>
            <person name="Shimokawa K."/>
            <person name="Bajic V.B."/>
            <person name="Brenner S.E."/>
            <person name="Batalov S."/>
            <person name="Forrest A.R."/>
            <person name="Zavolan M."/>
            <person name="Davis M.J."/>
            <person name="Wilming L.G."/>
            <person name="Aidinis V."/>
            <person name="Allen J.E."/>
            <person name="Ambesi-Impiombato A."/>
            <person name="Apweiler R."/>
            <person name="Aturaliya R.N."/>
            <person name="Bailey T.L."/>
            <person name="Bansal M."/>
            <person name="Baxter L."/>
            <person name="Beisel K.W."/>
            <person name="Bersano T."/>
            <person name="Bono H."/>
            <person name="Chalk A.M."/>
            <person name="Chiu K.P."/>
            <person name="Choudhary V."/>
            <person name="Christoffels A."/>
            <person name="Clutterbuck D.R."/>
            <person name="Crowe M.L."/>
            <person name="Dalla E."/>
            <person name="Dalrymple B.P."/>
            <person name="de Bono B."/>
            <person name="Della Gatta G."/>
            <person name="di Bernardo D."/>
            <person name="Down T."/>
            <person name="Engstrom P."/>
            <person name="Fagiolini M."/>
            <person name="Faulkner G."/>
            <person name="Fletcher C.F."/>
            <person name="Fukushima T."/>
            <person name="Furuno M."/>
            <person name="Futaki S."/>
            <person name="Gariboldi M."/>
            <person name="Georgii-Hemming P."/>
            <person name="Gingeras T.R."/>
            <person name="Gojobori T."/>
            <person name="Green R.E."/>
            <person name="Gustincich S."/>
            <person name="Harbers M."/>
            <person name="Hayashi Y."/>
            <person name="Hensch T.K."/>
            <person name="Hirokawa N."/>
            <person name="Hill D."/>
            <person name="Huminiecki L."/>
            <person name="Iacono M."/>
            <person name="Ikeo K."/>
            <person name="Iwama A."/>
            <person name="Ishikawa T."/>
            <person name="Jakt M."/>
            <person name="Kanapin A."/>
            <person name="Katoh M."/>
            <person name="Kawasawa Y."/>
            <person name="Kelso J."/>
            <person name="Kitamura H."/>
            <person name="Kitano H."/>
            <person name="Kollias G."/>
            <person name="Krishnan S.P."/>
            <person name="Kruger A."/>
            <person name="Kummerfeld S.K."/>
            <person name="Kurochkin I.V."/>
            <person name="Lareau L.F."/>
            <person name="Lazarevic D."/>
            <person name="Lipovich L."/>
            <person name="Liu J."/>
            <person name="Liuni S."/>
            <person name="McWilliam S."/>
            <person name="Madan Babu M."/>
            <person name="Madera M."/>
            <person name="Marchionni L."/>
            <person name="Matsuda H."/>
            <person name="Matsuzawa S."/>
            <person name="Miki H."/>
            <person name="Mignone F."/>
            <person name="Miyake S."/>
            <person name="Morris K."/>
            <person name="Mottagui-Tabar S."/>
            <person name="Mulder N."/>
            <person name="Nakano N."/>
            <person name="Nakauchi H."/>
            <person name="Ng P."/>
            <person name="Nilsson R."/>
            <person name="Nishiguchi S."/>
            <person name="Nishikawa S."/>
            <person name="Nori F."/>
            <person name="Ohara O."/>
            <person name="Okazaki Y."/>
            <person name="Orlando V."/>
            <person name="Pang K.C."/>
            <person name="Pavan W.J."/>
            <person name="Pavesi G."/>
            <person name="Pesole G."/>
            <person name="Petrovsky N."/>
            <person name="Piazza S."/>
            <person name="Reed J."/>
            <person name="Reid J.F."/>
            <person name="Ring B.Z."/>
            <person name="Ringwald M."/>
            <person name="Rost B."/>
            <person name="Ruan Y."/>
            <person name="Salzberg S.L."/>
            <person name="Sandelin A."/>
            <person name="Schneider C."/>
            <person name="Schoenbach C."/>
            <person name="Sekiguchi K."/>
            <person name="Semple C.A."/>
            <person name="Seno S."/>
            <person name="Sessa L."/>
            <person name="Sheng Y."/>
            <person name="Shibata Y."/>
            <person name="Shimada H."/>
            <person name="Shimada K."/>
            <person name="Silva D."/>
            <person name="Sinclair B."/>
            <person name="Sperling S."/>
            <person name="Stupka E."/>
            <person name="Sugiura K."/>
            <person name="Sultana R."/>
            <person name="Takenaka Y."/>
            <person name="Taki K."/>
            <person name="Tammoja K."/>
            <person name="Tan S.L."/>
            <person name="Tang S."/>
            <person name="Taylor M.S."/>
            <person name="Tegner J."/>
            <person name="Teichmann S.A."/>
            <person name="Ueda H.R."/>
            <person name="van Nimwegen E."/>
            <person name="Verardo R."/>
            <person name="Wei C.L."/>
            <person name="Yagi K."/>
            <person name="Yamanishi H."/>
            <person name="Zabarovsky E."/>
            <person name="Zhu S."/>
            <person name="Zimmer A."/>
            <person name="Hide W."/>
            <person name="Bult C."/>
            <person name="Grimmond S.M."/>
            <person name="Teasdale R.D."/>
            <person name="Liu E.T."/>
            <person name="Brusic V."/>
            <person name="Quackenbush J."/>
            <person name="Wahlestedt C."/>
            <person name="Mattick J.S."/>
            <person name="Hume D.A."/>
            <person name="Kai C."/>
            <person name="Sasaki D."/>
            <person name="Tomaru Y."/>
            <person name="Fukuda S."/>
            <person name="Kanamori-Katayama M."/>
            <person name="Suzuki M."/>
            <person name="Aoki J."/>
            <person name="Arakawa T."/>
            <person name="Iida J."/>
            <person name="Imamura K."/>
            <person name="Itoh M."/>
            <person name="Kato T."/>
            <person name="Kawaji H."/>
            <person name="Kawagashira N."/>
            <person name="Kawashima T."/>
            <person name="Kojima M."/>
            <person name="Kondo S."/>
            <person name="Konno H."/>
            <person name="Nakano K."/>
            <person name="Ninomiya N."/>
            <person name="Nishio T."/>
            <person name="Okada M."/>
            <person name="Plessy C."/>
            <person name="Shibata K."/>
            <person name="Shiraki T."/>
            <person name="Suzuki S."/>
            <person name="Tagami M."/>
            <person name="Waki K."/>
            <person name="Watahiki A."/>
            <person name="Okamura-Oho Y."/>
            <person name="Suzuki H."/>
            <person name="Kawai J."/>
            <person name="Hayashizaki Y."/>
        </authorList>
    </citation>
    <scope>NUCLEOTIDE SEQUENCE [LARGE SCALE MRNA] (ISOFORMS 1 AND 3)</scope>
    <source>
        <strain>C57BL/6J</strain>
        <strain>NOD</strain>
        <tissue>Embryo</tissue>
    </source>
</reference>
<reference key="3">
    <citation type="journal article" date="2004" name="Genome Res.">
        <title>The status, quality, and expansion of the NIH full-length cDNA project: the Mammalian Gene Collection (MGC).</title>
        <authorList>
            <consortium name="The MGC Project Team"/>
        </authorList>
    </citation>
    <scope>NUCLEOTIDE SEQUENCE [LARGE SCALE MRNA] (ISOFORM 2)</scope>
    <source>
        <strain>C57BL/6J</strain>
        <tissue>Brain</tissue>
    </source>
</reference>
<reference key="4">
    <citation type="journal article" date="2010" name="Cell">
        <title>A tissue-specific atlas of mouse protein phosphorylation and expression.</title>
        <authorList>
            <person name="Huttlin E.L."/>
            <person name="Jedrychowski M.P."/>
            <person name="Elias J.E."/>
            <person name="Goswami T."/>
            <person name="Rad R."/>
            <person name="Beausoleil S.A."/>
            <person name="Villen J."/>
            <person name="Haas W."/>
            <person name="Sowa M.E."/>
            <person name="Gygi S.P."/>
        </authorList>
    </citation>
    <scope>PHOSPHORYLATION [LARGE SCALE ANALYSIS] AT SER-199; THR-201; THR-204; SER-208 AND SER-224</scope>
    <scope>IDENTIFICATION BY MASS SPECTROMETRY [LARGE SCALE ANALYSIS]</scope>
    <source>
        <tissue>Brain</tissue>
        <tissue>Kidney</tissue>
        <tissue>Liver</tissue>
        <tissue>Lung</tissue>
        <tissue>Spleen</tissue>
        <tissue>Testis</tissue>
    </source>
</reference>
<reference key="5">
    <citation type="journal article" date="2012" name="Proc. Natl. Acad. Sci. U.S.A.">
        <title>Active maintenance of nuclear actin by importin 9 supports transcription.</title>
        <authorList>
            <person name="Dopie J."/>
            <person name="Skarp K.P."/>
            <person name="Rajakyla E.K."/>
            <person name="Tanhuanpaa K."/>
            <person name="Vartiainen M.K."/>
        </authorList>
    </citation>
    <scope>FUNCTION</scope>
</reference>
<sequence length="1125" mass="128664">MASEEASLRALESLMTEFFHDCTTNERKREIEELLNNFAQQVGAWRFCLYFLSSTRNDYVMMYSLTVFENLINKMWLGVPSQDKMEIRSCLPKLLLAHHKTLPYFIRNKLCKVIVDIGRQDWPMFYHDFFTNILQLIQSPVTTPLGLIMLKTTSEELACPREDLSVARKEELRKLLLDQVQTVLGLLTGILETVWDKHSVTAATPPPSPTSGESGDLLSNLLQSPSSAKLLHQPIPILDVESEYVCSLALECLAHLFSWIPLSASITPSLLTTIFHFARFGCDTRARKMASVNGSSQNCVLGQERGRLGVLAMSCINELMSKNCVPMEFEEYLLRMFQQTFYLLQKITKDNNAHTVKSRLEELDESYIEKFTDFLRLFVSVHLRRIESYSQFPVVEFLTLLFKYTFHQPTHEGYFSCLDIWTLFLDYLTSKIKSRLGDKEAVLNRYEDALVLLLTEVLNRIQFRYNQAQLEELDDETLDDDQQTEWQRYLRQSLEVVAKVMELLPTHAFSTLFPVLQDNLEVYLGLQQFVVTSGSGHRLNITAENDCRRLHCSLRDLSSLLQAVGRLAEYFIGDVFAARFNDALTVVERLVKVTLYGSQIKLYNIETAVPSVLKPDLIDVHAQSLAALQAYSHWLAQYCGEAHRQNTQQFVTLISTTMDAITPLISTKVQDKLLLSACHLLVSLATTVRPVFLISIPAVQKVFNSIIDASAQRLTDKAQVLVCRALSNTLLLPWPNLPESEQQWPLRSINHASLISALSRDYHSLKPSATAPQRKVPLGDTKVIIHQTLSVLEDIVENISGESTKSRQICYQSLQESVQVSLALFPAFIHQSDVTDEMLSFFLTLFRGLRVQMGVPFTEQIIQTFLNMFTREQLAESILHEGSTGCRVVEKFLKILQVVVQEPGQVFKPFLPSIIALCMEQVYPIIAERPSPDVKAELFELLFRTLHHNWRYFFKSTVLASVQRGIAEEQMENEPQFSAIMQAFGQSFLQPDIHLFKQNLFYLETLNTKQKLYHKKIFRTTMLFQFVNVLLQVLVHKSHDLLQEEIGIAIYNMASVDFDGFFAAFLPEFLTSCDGVDANQKNVLGRNFKMDRDLPSFTQNVHRLVNDLRYYRLCNDSLPPGTVKL</sequence>
<dbReference type="EMBL" id="AY029528">
    <property type="protein sequence ID" value="AAK40296.1"/>
    <property type="molecule type" value="mRNA"/>
</dbReference>
<dbReference type="EMBL" id="AK011324">
    <property type="protein sequence ID" value="BAB27545.1"/>
    <property type="molecule type" value="mRNA"/>
</dbReference>
<dbReference type="EMBL" id="AK154709">
    <property type="protein sequence ID" value="BAE32778.1"/>
    <property type="molecule type" value="mRNA"/>
</dbReference>
<dbReference type="EMBL" id="BC058090">
    <property type="protein sequence ID" value="AAH58090.1"/>
    <property type="molecule type" value="mRNA"/>
</dbReference>
<dbReference type="CCDS" id="CCDS52396.1">
    <molecule id="Q924Z6-2"/>
</dbReference>
<dbReference type="CCDS" id="CCDS80800.1">
    <molecule id="Q924Z6-1"/>
</dbReference>
<dbReference type="RefSeq" id="NP_001298072.1">
    <molecule id="Q924Z6-1"/>
    <property type="nucleotide sequence ID" value="NM_001311143.2"/>
</dbReference>
<dbReference type="RefSeq" id="NP_083092.2">
    <molecule id="Q924Z6-2"/>
    <property type="nucleotide sequence ID" value="NM_028816.2"/>
</dbReference>
<dbReference type="SMR" id="Q924Z6"/>
<dbReference type="FunCoup" id="Q924Z6">
    <property type="interactions" value="4165"/>
</dbReference>
<dbReference type="STRING" id="10090.ENSMUSP00000130527"/>
<dbReference type="GlyGen" id="Q924Z6">
    <property type="glycosylation" value="1 site"/>
</dbReference>
<dbReference type="iPTMnet" id="Q924Z6"/>
<dbReference type="PhosphoSitePlus" id="Q924Z6"/>
<dbReference type="SwissPalm" id="Q924Z6"/>
<dbReference type="jPOST" id="Q924Z6"/>
<dbReference type="PaxDb" id="10090-ENSMUSP00000009344"/>
<dbReference type="PeptideAtlas" id="Q924Z6"/>
<dbReference type="ProteomicsDB" id="299720">
    <molecule id="Q924Z6-1"/>
</dbReference>
<dbReference type="ProteomicsDB" id="299721">
    <molecule id="Q924Z6-2"/>
</dbReference>
<dbReference type="ProteomicsDB" id="299722">
    <molecule id="Q924Z6-3"/>
</dbReference>
<dbReference type="Pumba" id="Q924Z6"/>
<dbReference type="Antibodypedia" id="26312">
    <property type="antibodies" value="65 antibodies from 19 providers"/>
</dbReference>
<dbReference type="DNASU" id="74204"/>
<dbReference type="Ensembl" id="ENSMUST00000009344.16">
    <molecule id="Q924Z6-2"/>
    <property type="protein sequence ID" value="ENSMUSP00000009344.10"/>
    <property type="gene ID" value="ENSMUSG00000000131.16"/>
</dbReference>
<dbReference type="Ensembl" id="ENSMUST00000168189.8">
    <molecule id="Q924Z6-1"/>
    <property type="protein sequence ID" value="ENSMUSP00000130527.2"/>
    <property type="gene ID" value="ENSMUSG00000000131.16"/>
</dbReference>
<dbReference type="GeneID" id="74204"/>
<dbReference type="KEGG" id="mmu:74204"/>
<dbReference type="UCSC" id="uc009jqq.1">
    <molecule id="Q924Z6-1"/>
    <property type="organism name" value="mouse"/>
</dbReference>
<dbReference type="UCSC" id="uc009jqr.1">
    <molecule id="Q924Z6-2"/>
    <property type="organism name" value="mouse"/>
</dbReference>
<dbReference type="AGR" id="MGI:2429950"/>
<dbReference type="CTD" id="23214"/>
<dbReference type="MGI" id="MGI:2429950">
    <property type="gene designation" value="Xpo6"/>
</dbReference>
<dbReference type="VEuPathDB" id="HostDB:ENSMUSG00000000131"/>
<dbReference type="eggNOG" id="KOG2020">
    <property type="taxonomic scope" value="Eukaryota"/>
</dbReference>
<dbReference type="GeneTree" id="ENSGT00390000002810"/>
<dbReference type="HOGENOM" id="CLU_004473_0_0_1"/>
<dbReference type="InParanoid" id="Q924Z6"/>
<dbReference type="OMA" id="KITRFNH"/>
<dbReference type="OrthoDB" id="10261013at2759"/>
<dbReference type="PhylomeDB" id="Q924Z6"/>
<dbReference type="TreeFam" id="TF323443"/>
<dbReference type="BioGRID-ORCS" id="74204">
    <property type="hits" value="2 hits in 80 CRISPR screens"/>
</dbReference>
<dbReference type="ChiTaRS" id="Xpo6">
    <property type="organism name" value="mouse"/>
</dbReference>
<dbReference type="PRO" id="PR:Q924Z6"/>
<dbReference type="Proteomes" id="UP000000589">
    <property type="component" value="Chromosome 7"/>
</dbReference>
<dbReference type="RNAct" id="Q924Z6">
    <property type="molecule type" value="protein"/>
</dbReference>
<dbReference type="Bgee" id="ENSMUSG00000000131">
    <property type="expression patterns" value="Expressed in embryonic post-anal tail and 267 other cell types or tissues"/>
</dbReference>
<dbReference type="ExpressionAtlas" id="Q924Z6">
    <property type="expression patterns" value="baseline and differential"/>
</dbReference>
<dbReference type="GO" id="GO:0005829">
    <property type="term" value="C:cytosol"/>
    <property type="evidence" value="ECO:0007669"/>
    <property type="project" value="Ensembl"/>
</dbReference>
<dbReference type="GO" id="GO:0005730">
    <property type="term" value="C:nucleolus"/>
    <property type="evidence" value="ECO:0007669"/>
    <property type="project" value="Ensembl"/>
</dbReference>
<dbReference type="GO" id="GO:0005654">
    <property type="term" value="C:nucleoplasm"/>
    <property type="evidence" value="ECO:0007669"/>
    <property type="project" value="Ensembl"/>
</dbReference>
<dbReference type="GO" id="GO:0005886">
    <property type="term" value="C:plasma membrane"/>
    <property type="evidence" value="ECO:0007669"/>
    <property type="project" value="Ensembl"/>
</dbReference>
<dbReference type="GO" id="GO:0032991">
    <property type="term" value="C:protein-containing complex"/>
    <property type="evidence" value="ECO:0000266"/>
    <property type="project" value="MGI"/>
</dbReference>
<dbReference type="GO" id="GO:0005049">
    <property type="term" value="F:nuclear export signal receptor activity"/>
    <property type="evidence" value="ECO:0007669"/>
    <property type="project" value="Ensembl"/>
</dbReference>
<dbReference type="GO" id="GO:0031267">
    <property type="term" value="F:small GTPase binding"/>
    <property type="evidence" value="ECO:0007669"/>
    <property type="project" value="InterPro"/>
</dbReference>
<dbReference type="GO" id="GO:0006611">
    <property type="term" value="P:protein export from nucleus"/>
    <property type="evidence" value="ECO:0000315"/>
    <property type="project" value="UniProtKB"/>
</dbReference>
<dbReference type="FunFam" id="1.25.10.10:FF:000147">
    <property type="entry name" value="exportin-6 isoform X2"/>
    <property type="match status" value="1"/>
</dbReference>
<dbReference type="Gene3D" id="1.25.10.10">
    <property type="entry name" value="Leucine-rich Repeat Variant"/>
    <property type="match status" value="1"/>
</dbReference>
<dbReference type="InterPro" id="IPR011989">
    <property type="entry name" value="ARM-like"/>
</dbReference>
<dbReference type="InterPro" id="IPR016024">
    <property type="entry name" value="ARM-type_fold"/>
</dbReference>
<dbReference type="InterPro" id="IPR013598">
    <property type="entry name" value="Exportin-1/Importin-b-like"/>
</dbReference>
<dbReference type="InterPro" id="IPR001494">
    <property type="entry name" value="Importin-beta_N"/>
</dbReference>
<dbReference type="InterPro" id="IPR040016">
    <property type="entry name" value="XPO6"/>
</dbReference>
<dbReference type="PANTHER" id="PTHR21452">
    <property type="entry name" value="EXPORTIN-6"/>
    <property type="match status" value="1"/>
</dbReference>
<dbReference type="PANTHER" id="PTHR21452:SF4">
    <property type="entry name" value="EXPORTIN-6"/>
    <property type="match status" value="1"/>
</dbReference>
<dbReference type="Pfam" id="PF03810">
    <property type="entry name" value="IBN_N"/>
    <property type="match status" value="1"/>
</dbReference>
<dbReference type="Pfam" id="PF08389">
    <property type="entry name" value="Xpo1"/>
    <property type="match status" value="1"/>
</dbReference>
<dbReference type="SMART" id="SM00913">
    <property type="entry name" value="IBN_N"/>
    <property type="match status" value="1"/>
</dbReference>
<dbReference type="SUPFAM" id="SSF48371">
    <property type="entry name" value="ARM repeat"/>
    <property type="match status" value="1"/>
</dbReference>
<dbReference type="PROSITE" id="PS50166">
    <property type="entry name" value="IMPORTIN_B_NT"/>
    <property type="match status" value="1"/>
</dbReference>
<protein>
    <recommendedName>
        <fullName>Exportin-6</fullName>
        <shortName>Exp6</shortName>
    </recommendedName>
    <alternativeName>
        <fullName>Ran-binding protein 20</fullName>
    </alternativeName>
</protein>
<comment type="function">
    <text evidence="3">Mediates the nuclear export of actin and profilin-actin complexes in somatic cells.</text>
</comment>
<comment type="subunit">
    <text evidence="1">Found in a complex with XPO6, Ran, ACTB and PFN1. Interacts with ACTB. Interacts with ACTB in a RanGTP-dependent manner.</text>
</comment>
<comment type="subcellular location">
    <subcellularLocation>
        <location evidence="1">Nucleus</location>
    </subcellularLocation>
    <subcellularLocation>
        <location evidence="1">Cytoplasm</location>
    </subcellularLocation>
    <text evidence="1">Shuttles between the nucleus and the cytoplasm.</text>
</comment>
<comment type="alternative products">
    <event type="alternative splicing"/>
    <isoform>
        <id>Q924Z6-1</id>
        <name>1</name>
        <sequence type="displayed"/>
    </isoform>
    <isoform>
        <id>Q924Z6-2</id>
        <name>2</name>
        <sequence type="described" ref="VSP_018467"/>
    </isoform>
    <isoform>
        <id>Q924Z6-3</id>
        <name>3</name>
        <sequence type="described" ref="VSP_018466 VSP_018468"/>
    </isoform>
</comment>
<comment type="similarity">
    <text evidence="6">Belongs to the exportin family.</text>
</comment>
<feature type="initiator methionine" description="Removed" evidence="1">
    <location>
        <position position="1"/>
    </location>
</feature>
<feature type="chain" id="PRO_0000235302" description="Exportin-6">
    <location>
        <begin position="2"/>
        <end position="1125"/>
    </location>
</feature>
<feature type="domain" description="Importin N-terminal" evidence="2">
    <location>
        <begin position="31"/>
        <end position="97"/>
    </location>
</feature>
<feature type="modified residue" description="N-acetylalanine" evidence="1">
    <location>
        <position position="2"/>
    </location>
</feature>
<feature type="modified residue" description="Phosphoserine" evidence="7">
    <location>
        <position position="199"/>
    </location>
</feature>
<feature type="modified residue" description="Phosphothreonine" evidence="7">
    <location>
        <position position="201"/>
    </location>
</feature>
<feature type="modified residue" description="Phosphothreonine" evidence="7">
    <location>
        <position position="204"/>
    </location>
</feature>
<feature type="modified residue" description="Phosphoserine" evidence="7">
    <location>
        <position position="208"/>
    </location>
</feature>
<feature type="modified residue" description="Phosphoserine" evidence="7">
    <location>
        <position position="224"/>
    </location>
</feature>
<feature type="splice variant" id="VSP_018466" description="In isoform 3." evidence="5">
    <location>
        <begin position="1"/>
        <end position="879"/>
    </location>
</feature>
<feature type="splice variant" id="VSP_018467" description="In isoform 2." evidence="4">
    <location>
        <position position="482"/>
    </location>
</feature>
<feature type="splice variant" id="VSP_018468" description="In isoform 3." evidence="5">
    <original>HEGSTGCRVVEKFLKILQVVVQEPGQVFKPFLPSIIALCMEQVYPIIAE</original>
    <variation>MAQGLLHGKWQKCGWDMSTGYCLAPLRLLWWPPPSCMEGRCSVVWISLQ</variation>
    <location>
        <begin position="880"/>
        <end position="928"/>
    </location>
</feature>
<feature type="sequence conflict" description="In Ref. 2; AAH58090." evidence="6" ref="2">
    <location>
        <position position="483"/>
    </location>
</feature>
<feature type="sequence conflict" description="In Ref. 2; BAE32778." evidence="6" ref="2">
    <original>A</original>
    <variation>S</variation>
    <location>
        <position position="626"/>
    </location>
</feature>
<feature type="sequence conflict" description="In Ref. 2; BAE32778." evidence="6" ref="2">
    <original>S</original>
    <variation>R</variation>
    <location>
        <position position="1072"/>
    </location>
</feature>
<organism>
    <name type="scientific">Mus musculus</name>
    <name type="common">Mouse</name>
    <dbReference type="NCBI Taxonomy" id="10090"/>
    <lineage>
        <taxon>Eukaryota</taxon>
        <taxon>Metazoa</taxon>
        <taxon>Chordata</taxon>
        <taxon>Craniata</taxon>
        <taxon>Vertebrata</taxon>
        <taxon>Euteleostomi</taxon>
        <taxon>Mammalia</taxon>
        <taxon>Eutheria</taxon>
        <taxon>Euarchontoglires</taxon>
        <taxon>Glires</taxon>
        <taxon>Rodentia</taxon>
        <taxon>Myomorpha</taxon>
        <taxon>Muroidea</taxon>
        <taxon>Muridae</taxon>
        <taxon>Murinae</taxon>
        <taxon>Mus</taxon>
        <taxon>Mus</taxon>
    </lineage>
</organism>
<accession>Q924Z6</accession>
<accession>Q3U3K7</accession>
<accession>Q6PEF3</accession>
<accession>Q9D0K9</accession>
<evidence type="ECO:0000250" key="1">
    <source>
        <dbReference type="UniProtKB" id="Q96QU8"/>
    </source>
</evidence>
<evidence type="ECO:0000255" key="2">
    <source>
        <dbReference type="PROSITE-ProRule" id="PRU00115"/>
    </source>
</evidence>
<evidence type="ECO:0000269" key="3">
    <source>
    </source>
</evidence>
<evidence type="ECO:0000303" key="4">
    <source>
    </source>
</evidence>
<evidence type="ECO:0000303" key="5">
    <source>
    </source>
</evidence>
<evidence type="ECO:0000305" key="6"/>
<evidence type="ECO:0007744" key="7">
    <source>
    </source>
</evidence>
<name>XPO6_MOUSE</name>
<proteinExistence type="evidence at protein level"/>
<keyword id="KW-0007">Acetylation</keyword>
<keyword id="KW-0025">Alternative splicing</keyword>
<keyword id="KW-0963">Cytoplasm</keyword>
<keyword id="KW-0539">Nucleus</keyword>
<keyword id="KW-0597">Phosphoprotein</keyword>
<keyword id="KW-0653">Protein transport</keyword>
<keyword id="KW-1185">Reference proteome</keyword>
<keyword id="KW-0813">Transport</keyword>